<gene>
    <name evidence="1" type="primary">ureC</name>
    <name type="ordered locus">Lcho_1076</name>
</gene>
<keyword id="KW-0963">Cytoplasm</keyword>
<keyword id="KW-0378">Hydrolase</keyword>
<keyword id="KW-0479">Metal-binding</keyword>
<keyword id="KW-0533">Nickel</keyword>
<keyword id="KW-1185">Reference proteome</keyword>
<organism>
    <name type="scientific">Leptothrix cholodnii (strain ATCC 51168 / LMG 8142 / SP-6)</name>
    <name type="common">Leptothrix discophora (strain SP-6)</name>
    <dbReference type="NCBI Taxonomy" id="395495"/>
    <lineage>
        <taxon>Bacteria</taxon>
        <taxon>Pseudomonadati</taxon>
        <taxon>Pseudomonadota</taxon>
        <taxon>Betaproteobacteria</taxon>
        <taxon>Burkholderiales</taxon>
        <taxon>Sphaerotilaceae</taxon>
        <taxon>Leptothrix</taxon>
    </lineage>
</organism>
<proteinExistence type="inferred from homology"/>
<comment type="catalytic activity">
    <reaction evidence="1">
        <text>urea + 2 H2O + H(+) = hydrogencarbonate + 2 NH4(+)</text>
        <dbReference type="Rhea" id="RHEA:20557"/>
        <dbReference type="ChEBI" id="CHEBI:15377"/>
        <dbReference type="ChEBI" id="CHEBI:15378"/>
        <dbReference type="ChEBI" id="CHEBI:16199"/>
        <dbReference type="ChEBI" id="CHEBI:17544"/>
        <dbReference type="ChEBI" id="CHEBI:28938"/>
        <dbReference type="EC" id="3.5.1.5"/>
    </reaction>
</comment>
<comment type="cofactor">
    <cofactor evidence="1">
        <name>Ni cation</name>
        <dbReference type="ChEBI" id="CHEBI:25516"/>
    </cofactor>
    <text evidence="1">Binds 2 nickel ions per subunit.</text>
</comment>
<comment type="pathway">
    <text evidence="1">Nitrogen metabolism; urea degradation; CO(2) and NH(3) from urea (urease route): step 1/1.</text>
</comment>
<comment type="subunit">
    <text evidence="1">Heterotrimer of UreA (gamma), UreB (beta) and UreC (alpha) subunits. Three heterotrimers associate to form the active enzyme.</text>
</comment>
<comment type="subcellular location">
    <subcellularLocation>
        <location evidence="1">Cytoplasm</location>
    </subcellularLocation>
</comment>
<comment type="PTM">
    <text evidence="1">Carboxylation allows a single lysine to coordinate two nickel ions.</text>
</comment>
<comment type="similarity">
    <text evidence="1">Belongs to the metallo-dependent hydrolases superfamily. Urease alpha subunit family.</text>
</comment>
<feature type="chain" id="PRO_1000188881" description="Urease subunit alpha">
    <location>
        <begin position="1"/>
        <end position="575"/>
    </location>
</feature>
<feature type="domain" description="Urease" evidence="1">
    <location>
        <begin position="137"/>
        <end position="575"/>
    </location>
</feature>
<feature type="active site" description="Proton donor" evidence="1">
    <location>
        <position position="328"/>
    </location>
</feature>
<feature type="binding site" evidence="1">
    <location>
        <position position="142"/>
    </location>
    <ligand>
        <name>Ni(2+)</name>
        <dbReference type="ChEBI" id="CHEBI:49786"/>
        <label>1</label>
    </ligand>
</feature>
<feature type="binding site" evidence="1">
    <location>
        <position position="144"/>
    </location>
    <ligand>
        <name>Ni(2+)</name>
        <dbReference type="ChEBI" id="CHEBI:49786"/>
        <label>1</label>
    </ligand>
</feature>
<feature type="binding site" description="via carbamate group" evidence="1">
    <location>
        <position position="225"/>
    </location>
    <ligand>
        <name>Ni(2+)</name>
        <dbReference type="ChEBI" id="CHEBI:49786"/>
        <label>1</label>
    </ligand>
</feature>
<feature type="binding site" description="via carbamate group" evidence="1">
    <location>
        <position position="225"/>
    </location>
    <ligand>
        <name>Ni(2+)</name>
        <dbReference type="ChEBI" id="CHEBI:49786"/>
        <label>2</label>
    </ligand>
</feature>
<feature type="binding site" evidence="1">
    <location>
        <position position="227"/>
    </location>
    <ligand>
        <name>substrate</name>
    </ligand>
</feature>
<feature type="binding site" evidence="1">
    <location>
        <position position="254"/>
    </location>
    <ligand>
        <name>Ni(2+)</name>
        <dbReference type="ChEBI" id="CHEBI:49786"/>
        <label>2</label>
    </ligand>
</feature>
<feature type="binding site" evidence="1">
    <location>
        <position position="280"/>
    </location>
    <ligand>
        <name>Ni(2+)</name>
        <dbReference type="ChEBI" id="CHEBI:49786"/>
        <label>2</label>
    </ligand>
</feature>
<feature type="binding site" evidence="1">
    <location>
        <position position="368"/>
    </location>
    <ligand>
        <name>Ni(2+)</name>
        <dbReference type="ChEBI" id="CHEBI:49786"/>
        <label>1</label>
    </ligand>
</feature>
<feature type="modified residue" description="N6-carboxylysine" evidence="1">
    <location>
        <position position="225"/>
    </location>
</feature>
<evidence type="ECO:0000255" key="1">
    <source>
        <dbReference type="HAMAP-Rule" id="MF_01953"/>
    </source>
</evidence>
<dbReference type="EC" id="3.5.1.5" evidence="1"/>
<dbReference type="EMBL" id="CP001013">
    <property type="protein sequence ID" value="ACB33345.1"/>
    <property type="molecule type" value="Genomic_DNA"/>
</dbReference>
<dbReference type="RefSeq" id="WP_012346107.1">
    <property type="nucleotide sequence ID" value="NC_010524.1"/>
</dbReference>
<dbReference type="SMR" id="B1Y3V1"/>
<dbReference type="STRING" id="395495.Lcho_1076"/>
<dbReference type="MEROPS" id="M38.982"/>
<dbReference type="KEGG" id="lch:Lcho_1076"/>
<dbReference type="eggNOG" id="COG0804">
    <property type="taxonomic scope" value="Bacteria"/>
</dbReference>
<dbReference type="HOGENOM" id="CLU_000980_0_0_4"/>
<dbReference type="OrthoDB" id="9802793at2"/>
<dbReference type="UniPathway" id="UPA00258">
    <property type="reaction ID" value="UER00370"/>
</dbReference>
<dbReference type="Proteomes" id="UP000001693">
    <property type="component" value="Chromosome"/>
</dbReference>
<dbReference type="GO" id="GO:0005737">
    <property type="term" value="C:cytoplasm"/>
    <property type="evidence" value="ECO:0007669"/>
    <property type="project" value="UniProtKB-SubCell"/>
</dbReference>
<dbReference type="GO" id="GO:0016151">
    <property type="term" value="F:nickel cation binding"/>
    <property type="evidence" value="ECO:0007669"/>
    <property type="project" value="UniProtKB-UniRule"/>
</dbReference>
<dbReference type="GO" id="GO:0009039">
    <property type="term" value="F:urease activity"/>
    <property type="evidence" value="ECO:0007669"/>
    <property type="project" value="UniProtKB-UniRule"/>
</dbReference>
<dbReference type="GO" id="GO:0043419">
    <property type="term" value="P:urea catabolic process"/>
    <property type="evidence" value="ECO:0007669"/>
    <property type="project" value="UniProtKB-UniRule"/>
</dbReference>
<dbReference type="CDD" id="cd00375">
    <property type="entry name" value="Urease_alpha"/>
    <property type="match status" value="1"/>
</dbReference>
<dbReference type="Gene3D" id="3.20.20.140">
    <property type="entry name" value="Metal-dependent hydrolases"/>
    <property type="match status" value="1"/>
</dbReference>
<dbReference type="Gene3D" id="2.30.40.10">
    <property type="entry name" value="Urease, subunit C, domain 1"/>
    <property type="match status" value="1"/>
</dbReference>
<dbReference type="HAMAP" id="MF_01953">
    <property type="entry name" value="Urease_alpha"/>
    <property type="match status" value="1"/>
</dbReference>
<dbReference type="InterPro" id="IPR006680">
    <property type="entry name" value="Amidohydro-rel"/>
</dbReference>
<dbReference type="InterPro" id="IPR011059">
    <property type="entry name" value="Metal-dep_hydrolase_composite"/>
</dbReference>
<dbReference type="InterPro" id="IPR032466">
    <property type="entry name" value="Metal_Hydrolase"/>
</dbReference>
<dbReference type="InterPro" id="IPR011612">
    <property type="entry name" value="Urease_alpha_N_dom"/>
</dbReference>
<dbReference type="InterPro" id="IPR050112">
    <property type="entry name" value="Urease_alpha_subunit"/>
</dbReference>
<dbReference type="InterPro" id="IPR017950">
    <property type="entry name" value="Urease_AS"/>
</dbReference>
<dbReference type="InterPro" id="IPR005848">
    <property type="entry name" value="Urease_asu"/>
</dbReference>
<dbReference type="InterPro" id="IPR017951">
    <property type="entry name" value="Urease_asu_c"/>
</dbReference>
<dbReference type="InterPro" id="IPR029754">
    <property type="entry name" value="Urease_Ni-bd"/>
</dbReference>
<dbReference type="NCBIfam" id="NF009685">
    <property type="entry name" value="PRK13206.1"/>
    <property type="match status" value="1"/>
</dbReference>
<dbReference type="NCBIfam" id="NF009686">
    <property type="entry name" value="PRK13207.1"/>
    <property type="match status" value="1"/>
</dbReference>
<dbReference type="NCBIfam" id="TIGR01792">
    <property type="entry name" value="urease_alph"/>
    <property type="match status" value="1"/>
</dbReference>
<dbReference type="PANTHER" id="PTHR43440">
    <property type="entry name" value="UREASE"/>
    <property type="match status" value="1"/>
</dbReference>
<dbReference type="PANTHER" id="PTHR43440:SF1">
    <property type="entry name" value="UREASE"/>
    <property type="match status" value="1"/>
</dbReference>
<dbReference type="Pfam" id="PF01979">
    <property type="entry name" value="Amidohydro_1"/>
    <property type="match status" value="1"/>
</dbReference>
<dbReference type="Pfam" id="PF00449">
    <property type="entry name" value="Urease_alpha"/>
    <property type="match status" value="1"/>
</dbReference>
<dbReference type="PRINTS" id="PR01752">
    <property type="entry name" value="UREASE"/>
</dbReference>
<dbReference type="SUPFAM" id="SSF51338">
    <property type="entry name" value="Composite domain of metallo-dependent hydrolases"/>
    <property type="match status" value="2"/>
</dbReference>
<dbReference type="SUPFAM" id="SSF51556">
    <property type="entry name" value="Metallo-dependent hydrolases"/>
    <property type="match status" value="1"/>
</dbReference>
<dbReference type="PROSITE" id="PS01120">
    <property type="entry name" value="UREASE_1"/>
    <property type="match status" value="1"/>
</dbReference>
<dbReference type="PROSITE" id="PS00145">
    <property type="entry name" value="UREASE_2"/>
    <property type="match status" value="1"/>
</dbReference>
<dbReference type="PROSITE" id="PS51368">
    <property type="entry name" value="UREASE_3"/>
    <property type="match status" value="1"/>
</dbReference>
<sequence>MATIPRRAYAEMFGPTIGDRLRLADTELILEVEDDLTLRAGGYGEEVKFGGGKTIRDGMGQGQRVNGPGAADAVDCVITNALIVDHWGIVKADIGLRGNRIAAIGKAGNPDIQPGVDIVIGPGTEVIAAEGLIVTAGGIDSHIHWICPQQIDEALASGVTTMLGGGTGPATGTFATTCTPGPENIARMLQAADAFPMNLGFFGKGNASRPEALRQQVDAGAIALKLHEDWGTTPAAIDCCLSVAEQTDIQVAIHTDTLNESGFVEDTVAAFKGRTIHTFHTEGAGGGHAPDIMKVVGEANVLPSSTNPTRPYTVNTLDEHLDMLMVCHHLDAGIAEDLAFAESRIRRETIAAEDILHDLGAISMMSSDSQAMGRVGEVVIRTWQTAHKMKVQRGKLPGDTDRHDNARIKRYIAKYTINPALAHGMSHEVGSIEVGKWADLVFWKPAFFGVKPSLVLKGGFIALAAMGDPNASIPTPQPVHYRPMFGSFGGALARTSLTFLSQAALADDVGTRYGLHKRLAAVRGIRSVKKADMIHNGATPVMEIDAQTYSVRADGQLLTCEPAQVLPMAQRYFLF</sequence>
<name>URE1_LEPCP</name>
<accession>B1Y3V1</accession>
<protein>
    <recommendedName>
        <fullName evidence="1">Urease subunit alpha</fullName>
        <ecNumber evidence="1">3.5.1.5</ecNumber>
    </recommendedName>
    <alternativeName>
        <fullName evidence="1">Urea amidohydrolase subunit alpha</fullName>
    </alternativeName>
</protein>
<reference key="1">
    <citation type="submission" date="2008-03" db="EMBL/GenBank/DDBJ databases">
        <title>Complete sequence of Leptothrix cholodnii SP-6.</title>
        <authorList>
            <consortium name="US DOE Joint Genome Institute"/>
            <person name="Copeland A."/>
            <person name="Lucas S."/>
            <person name="Lapidus A."/>
            <person name="Glavina del Rio T."/>
            <person name="Dalin E."/>
            <person name="Tice H."/>
            <person name="Bruce D."/>
            <person name="Goodwin L."/>
            <person name="Pitluck S."/>
            <person name="Chertkov O."/>
            <person name="Brettin T."/>
            <person name="Detter J.C."/>
            <person name="Han C."/>
            <person name="Kuske C.R."/>
            <person name="Schmutz J."/>
            <person name="Larimer F."/>
            <person name="Land M."/>
            <person name="Hauser L."/>
            <person name="Kyrpides N."/>
            <person name="Lykidis A."/>
            <person name="Emerson D."/>
            <person name="Richardson P."/>
        </authorList>
    </citation>
    <scope>NUCLEOTIDE SEQUENCE [LARGE SCALE GENOMIC DNA]</scope>
    <source>
        <strain>ATCC 51168 / LMG 8142 / SP-6</strain>
    </source>
</reference>